<comment type="function">
    <text evidence="7 9">Component of a multiprotein complex equivalent of the SWI/SNF complex, an ATP-dependent chromatin-remodeling complex, which is required for the positive and negative regulation of gene expression of a large number of genes. It changes chromatin structure by altering DNA-histone contacts within a nucleosome, leading eventually to a change in nucleosome position, thus facilitating or repressing binding of gene-specific transcription factors.</text>
</comment>
<comment type="subunit">
    <text evidence="6 8 9 10">Heterodimer. Interacts with SWI3A, SWI3B and BRM, but not with BSH. Interacts with MORC6 and SUVH9 (PubMed:27171427).</text>
</comment>
<comment type="interaction">
    <interactant intactId="EBI-1102300">
        <id>Q9XI07</id>
    </interactant>
    <interactant intactId="EBI-1102271">
        <id>Q84JG2</id>
        <label>SWI3B</label>
    </interactant>
    <organismsDiffer>false</organismsDiffer>
    <experiments>4</experiments>
</comment>
<comment type="subcellular location">
    <subcellularLocation>
        <location evidence="4">Nucleus</location>
    </subcellularLocation>
</comment>
<comment type="tissue specificity">
    <text evidence="7">Expressed in roots, stems, leaves, flowers and siliques.</text>
</comment>
<comment type="disruption phenotype">
    <text evidence="9">Plants are viable but have alterations in leaf, root and flower development, and are early flowering.</text>
</comment>
<dbReference type="EMBL" id="AC007727">
    <property type="protein sequence ID" value="AAD41423.1"/>
    <property type="molecule type" value="Genomic_DNA"/>
</dbReference>
<dbReference type="EMBL" id="CP002684">
    <property type="protein sequence ID" value="AEE30144.1"/>
    <property type="molecule type" value="Genomic_DNA"/>
</dbReference>
<dbReference type="EMBL" id="AY091026">
    <property type="protein sequence ID" value="AAM13847.1"/>
    <property type="molecule type" value="mRNA"/>
</dbReference>
<dbReference type="EMBL" id="AY117245">
    <property type="protein sequence ID" value="AAM51320.1"/>
    <property type="molecule type" value="mRNA"/>
</dbReference>
<dbReference type="PIR" id="D86350">
    <property type="entry name" value="D86350"/>
</dbReference>
<dbReference type="RefSeq" id="NP_173589.1">
    <property type="nucleotide sequence ID" value="NM_102019.4"/>
</dbReference>
<dbReference type="BioGRID" id="24013">
    <property type="interactions" value="163"/>
</dbReference>
<dbReference type="ComplexPortal" id="CPX-7723">
    <property type="entry name" value="BRAHMA SWI/SNF ATP-dependent chromatin remodeling complex"/>
</dbReference>
<dbReference type="DIP" id="DIP-37816N"/>
<dbReference type="FunCoup" id="Q9XI07">
    <property type="interactions" value="2851"/>
</dbReference>
<dbReference type="IntAct" id="Q9XI07">
    <property type="interactions" value="6"/>
</dbReference>
<dbReference type="STRING" id="3702.Q9XI07"/>
<dbReference type="iPTMnet" id="Q9XI07"/>
<dbReference type="PaxDb" id="3702-AT1G21700.1"/>
<dbReference type="ProteomicsDB" id="226556"/>
<dbReference type="EnsemblPlants" id="AT1G21700.1">
    <property type="protein sequence ID" value="AT1G21700.1"/>
    <property type="gene ID" value="AT1G21700"/>
</dbReference>
<dbReference type="GeneID" id="838774"/>
<dbReference type="Gramene" id="AT1G21700.1">
    <property type="protein sequence ID" value="AT1G21700.1"/>
    <property type="gene ID" value="AT1G21700"/>
</dbReference>
<dbReference type="KEGG" id="ath:AT1G21700"/>
<dbReference type="Araport" id="AT1G21700"/>
<dbReference type="TAIR" id="AT1G21700">
    <property type="gene designation" value="SWI3C"/>
</dbReference>
<dbReference type="eggNOG" id="KOG1279">
    <property type="taxonomic scope" value="Eukaryota"/>
</dbReference>
<dbReference type="HOGENOM" id="CLU_004447_4_1_1"/>
<dbReference type="InParanoid" id="Q9XI07"/>
<dbReference type="OMA" id="DCFHHGR"/>
<dbReference type="PhylomeDB" id="Q9XI07"/>
<dbReference type="PRO" id="PR:Q9XI07"/>
<dbReference type="Proteomes" id="UP000006548">
    <property type="component" value="Chromosome 1"/>
</dbReference>
<dbReference type="ExpressionAtlas" id="Q9XI07">
    <property type="expression patterns" value="baseline and differential"/>
</dbReference>
<dbReference type="GO" id="GO:0016514">
    <property type="term" value="C:SWI/SNF complex"/>
    <property type="evidence" value="ECO:0000250"/>
    <property type="project" value="TAIR"/>
</dbReference>
<dbReference type="GO" id="GO:0003677">
    <property type="term" value="F:DNA binding"/>
    <property type="evidence" value="ECO:0007669"/>
    <property type="project" value="UniProtKB-KW"/>
</dbReference>
<dbReference type="GO" id="GO:0008270">
    <property type="term" value="F:zinc ion binding"/>
    <property type="evidence" value="ECO:0007669"/>
    <property type="project" value="UniProtKB-KW"/>
</dbReference>
<dbReference type="GO" id="GO:0006338">
    <property type="term" value="P:chromatin remodeling"/>
    <property type="evidence" value="ECO:0000250"/>
    <property type="project" value="TAIR"/>
</dbReference>
<dbReference type="CDD" id="cd00167">
    <property type="entry name" value="SANT"/>
    <property type="match status" value="1"/>
</dbReference>
<dbReference type="FunFam" id="1.10.10.60:FF:000014">
    <property type="entry name" value="SWI/SNF complex subunit SMARCC2 isoform C"/>
    <property type="match status" value="1"/>
</dbReference>
<dbReference type="FunFam" id="1.10.10.10:FF:000020">
    <property type="entry name" value="SWI/SNF complex subunit SMARCC2 isoform c"/>
    <property type="match status" value="1"/>
</dbReference>
<dbReference type="Gene3D" id="1.10.10.60">
    <property type="entry name" value="Homeodomain-like"/>
    <property type="match status" value="1"/>
</dbReference>
<dbReference type="Gene3D" id="1.10.10.10">
    <property type="entry name" value="Winged helix-like DNA-binding domain superfamily/Winged helix DNA-binding domain"/>
    <property type="match status" value="1"/>
</dbReference>
<dbReference type="InterPro" id="IPR009057">
    <property type="entry name" value="Homeodomain-like_sf"/>
</dbReference>
<dbReference type="InterPro" id="IPR001005">
    <property type="entry name" value="SANT/Myb"/>
</dbReference>
<dbReference type="InterPro" id="IPR017884">
    <property type="entry name" value="SANT_dom"/>
</dbReference>
<dbReference type="InterPro" id="IPR032451">
    <property type="entry name" value="SMARCC_C"/>
</dbReference>
<dbReference type="InterPro" id="IPR007526">
    <property type="entry name" value="SWIRM"/>
</dbReference>
<dbReference type="InterPro" id="IPR036388">
    <property type="entry name" value="WH-like_DNA-bd_sf"/>
</dbReference>
<dbReference type="InterPro" id="IPR000433">
    <property type="entry name" value="Znf_ZZ"/>
</dbReference>
<dbReference type="PANTHER" id="PTHR12802">
    <property type="entry name" value="SWI/SNF COMPLEX-RELATED"/>
    <property type="match status" value="1"/>
</dbReference>
<dbReference type="PANTHER" id="PTHR12802:SF61">
    <property type="entry name" value="SWI_SNF COMPLEX SUBUNIT SWI3C"/>
    <property type="match status" value="1"/>
</dbReference>
<dbReference type="Pfam" id="PF00249">
    <property type="entry name" value="Myb_DNA-binding"/>
    <property type="match status" value="1"/>
</dbReference>
<dbReference type="Pfam" id="PF04433">
    <property type="entry name" value="SWIRM"/>
    <property type="match status" value="1"/>
</dbReference>
<dbReference type="Pfam" id="PF16495">
    <property type="entry name" value="SWIRM-assoc_1"/>
    <property type="match status" value="1"/>
</dbReference>
<dbReference type="SMART" id="SM00717">
    <property type="entry name" value="SANT"/>
    <property type="match status" value="1"/>
</dbReference>
<dbReference type="SUPFAM" id="SSF46689">
    <property type="entry name" value="Homeodomain-like"/>
    <property type="match status" value="2"/>
</dbReference>
<dbReference type="PROSITE" id="PS51293">
    <property type="entry name" value="SANT"/>
    <property type="match status" value="1"/>
</dbReference>
<dbReference type="PROSITE" id="PS50934">
    <property type="entry name" value="SWIRM"/>
    <property type="match status" value="1"/>
</dbReference>
<dbReference type="PROSITE" id="PS50135">
    <property type="entry name" value="ZF_ZZ_2"/>
    <property type="match status" value="1"/>
</dbReference>
<feature type="chain" id="PRO_0000344529" description="SWI/SNF complex subunit SWI3C">
    <location>
        <begin position="1"/>
        <end position="807"/>
    </location>
</feature>
<feature type="domain" description="SWIRM" evidence="3">
    <location>
        <begin position="176"/>
        <end position="274"/>
    </location>
</feature>
<feature type="domain" description="SANT" evidence="4">
    <location>
        <begin position="398"/>
        <end position="449"/>
    </location>
</feature>
<feature type="zinc finger region" description="ZZ-type; degenerate" evidence="2">
    <location>
        <begin position="340"/>
        <end position="394"/>
    </location>
</feature>
<feature type="region of interest" description="Disordered" evidence="5">
    <location>
        <begin position="1"/>
        <end position="74"/>
    </location>
</feature>
<feature type="region of interest" description="Disordered" evidence="5">
    <location>
        <begin position="458"/>
        <end position="487"/>
    </location>
</feature>
<feature type="region of interest" description="Disordered" evidence="5">
    <location>
        <begin position="549"/>
        <end position="571"/>
    </location>
</feature>
<feature type="region of interest" description="Disordered" evidence="5">
    <location>
        <begin position="692"/>
        <end position="713"/>
    </location>
</feature>
<feature type="region of interest" description="Disordered" evidence="5">
    <location>
        <begin position="721"/>
        <end position="740"/>
    </location>
</feature>
<feature type="region of interest" description="Disordered" evidence="5">
    <location>
        <begin position="781"/>
        <end position="807"/>
    </location>
</feature>
<feature type="coiled-coil region" evidence="1">
    <location>
        <begin position="598"/>
        <end position="656"/>
    </location>
</feature>
<feature type="compositionally biased region" description="Acidic residues" evidence="5">
    <location>
        <begin position="28"/>
        <end position="54"/>
    </location>
</feature>
<feature type="compositionally biased region" description="Polar residues" evidence="5">
    <location>
        <begin position="458"/>
        <end position="467"/>
    </location>
</feature>
<feature type="compositionally biased region" description="Polar residues" evidence="5">
    <location>
        <begin position="552"/>
        <end position="569"/>
    </location>
</feature>
<feature type="compositionally biased region" description="Low complexity" evidence="5">
    <location>
        <begin position="692"/>
        <end position="703"/>
    </location>
</feature>
<feature type="compositionally biased region" description="Low complexity" evidence="5">
    <location>
        <begin position="726"/>
        <end position="739"/>
    </location>
</feature>
<feature type="compositionally biased region" description="Gly residues" evidence="5">
    <location>
        <begin position="798"/>
        <end position="807"/>
    </location>
</feature>
<feature type="binding site" evidence="2">
    <location>
        <position position="345"/>
    </location>
    <ligand>
        <name>Zn(2+)</name>
        <dbReference type="ChEBI" id="CHEBI:29105"/>
    </ligand>
</feature>
<feature type="binding site" evidence="2">
    <location>
        <position position="348"/>
    </location>
    <ligand>
        <name>Zn(2+)</name>
        <dbReference type="ChEBI" id="CHEBI:29105"/>
    </ligand>
</feature>
<feature type="binding site" evidence="2">
    <location>
        <position position="368"/>
    </location>
    <ligand>
        <name>Zn(2+)</name>
        <dbReference type="ChEBI" id="CHEBI:29105"/>
    </ligand>
</feature>
<feature type="binding site" evidence="2">
    <location>
        <position position="371"/>
    </location>
    <ligand>
        <name>Zn(2+)</name>
        <dbReference type="ChEBI" id="CHEBI:29105"/>
    </ligand>
</feature>
<name>SWI3C_ARATH</name>
<sequence>MPASEDRRGKWKRKKRGGLSAARKPKQEEEDMEEEDEENNNNNNEEMDDVENADELQQNGGATPDPGLGIGEVVEDSGSRISDFPAVVKRVVIRPHASVMAVVAAERAGLIGETRGQGSLPALENISFGQLQALSTVPADSLDLERSDGSSSAYVISPPPIMDGEGVVKRFGDLVHVLPMHSDWFAPNTVDRLERQVVPQFFSGKSPNHTPESYMEFRNAIVSKYVENPEKTLTISDCQGLVDGVDIEDFARVFRFLDHWGIINYCATAQSHPGPLRDVSDVREDTNGEVNVPSAALTSIDSLIKFDKPNCRHKGGEVYSSLPSLDGDSPDLDIRIREHLCDSHCNHCSRPLPTVYFQSQKKGDILLCCDCFHHGRFVVGHSCLDFVRVDPMKFYGDQDGDNWTDQETLLLLEAVELYNENWVQIADHVGSKSKAQCILHFLRLPVEDGLLDNVEVSGVTNTENPTNGYDHKGTDSNGDLPGYSEQGSDTEIKLPFVKSPNPVMALVAFLASAVGPRVAASCAHESLSVLSEDDRMKSEGMQGKEASLLDGENQQQDGAHKTSSQNGAEAQTPLPQDKVMAAFRAGLSAAATKAKLFADHEEREIQRLSANIVNHQLKRMELKLKQFAEIETLLMKECEQVEKTRQRFSAERARMLSARFGSPGGISPQTNNLQGMSLSTGGNNINSLMHQQHQQQQASATSQPSIIPGFSNNPQVQAQMHFMARQQQQQQQQQQQQQQAFSFGPRLPLNAIQTNAGSTASPNVMFGNNQLNNPAAAGAASINQPSFSHPMVRSSTGSGSGSGLGLN</sequence>
<keyword id="KW-0010">Activator</keyword>
<keyword id="KW-0156">Chromatin regulator</keyword>
<keyword id="KW-0175">Coiled coil</keyword>
<keyword id="KW-0217">Developmental protein</keyword>
<keyword id="KW-0238">DNA-binding</keyword>
<keyword id="KW-0479">Metal-binding</keyword>
<keyword id="KW-0539">Nucleus</keyword>
<keyword id="KW-1185">Reference proteome</keyword>
<keyword id="KW-0804">Transcription</keyword>
<keyword id="KW-0805">Transcription regulation</keyword>
<keyword id="KW-0862">Zinc</keyword>
<keyword id="KW-0863">Zinc-finger</keyword>
<evidence type="ECO:0000255" key="1"/>
<evidence type="ECO:0000255" key="2">
    <source>
        <dbReference type="PROSITE-ProRule" id="PRU00228"/>
    </source>
</evidence>
<evidence type="ECO:0000255" key="3">
    <source>
        <dbReference type="PROSITE-ProRule" id="PRU00247"/>
    </source>
</evidence>
<evidence type="ECO:0000255" key="4">
    <source>
        <dbReference type="PROSITE-ProRule" id="PRU00624"/>
    </source>
</evidence>
<evidence type="ECO:0000256" key="5">
    <source>
        <dbReference type="SAM" id="MobiDB-lite"/>
    </source>
</evidence>
<evidence type="ECO:0000269" key="6">
    <source>
    </source>
</evidence>
<evidence type="ECO:0000269" key="7">
    <source>
    </source>
</evidence>
<evidence type="ECO:0000269" key="8">
    <source>
    </source>
</evidence>
<evidence type="ECO:0000269" key="9">
    <source>
    </source>
</evidence>
<evidence type="ECO:0000269" key="10">
    <source>
    </source>
</evidence>
<proteinExistence type="evidence at protein level"/>
<accession>Q9XI07</accession>
<organism>
    <name type="scientific">Arabidopsis thaliana</name>
    <name type="common">Mouse-ear cress</name>
    <dbReference type="NCBI Taxonomy" id="3702"/>
    <lineage>
        <taxon>Eukaryota</taxon>
        <taxon>Viridiplantae</taxon>
        <taxon>Streptophyta</taxon>
        <taxon>Embryophyta</taxon>
        <taxon>Tracheophyta</taxon>
        <taxon>Spermatophyta</taxon>
        <taxon>Magnoliopsida</taxon>
        <taxon>eudicotyledons</taxon>
        <taxon>Gunneridae</taxon>
        <taxon>Pentapetalae</taxon>
        <taxon>rosids</taxon>
        <taxon>malvids</taxon>
        <taxon>Brassicales</taxon>
        <taxon>Brassicaceae</taxon>
        <taxon>Camelineae</taxon>
        <taxon>Arabidopsis</taxon>
    </lineage>
</organism>
<gene>
    <name type="primary">SWI3C</name>
    <name type="synonym">CHB4</name>
    <name type="ordered locus">At1g21700</name>
    <name type="ORF">F8K7.13</name>
</gene>
<reference key="1">
    <citation type="journal article" date="2000" name="Nature">
        <title>Sequence and analysis of chromosome 1 of the plant Arabidopsis thaliana.</title>
        <authorList>
            <person name="Theologis A."/>
            <person name="Ecker J.R."/>
            <person name="Palm C.J."/>
            <person name="Federspiel N.A."/>
            <person name="Kaul S."/>
            <person name="White O."/>
            <person name="Alonso J."/>
            <person name="Altafi H."/>
            <person name="Araujo R."/>
            <person name="Bowman C.L."/>
            <person name="Brooks S.Y."/>
            <person name="Buehler E."/>
            <person name="Chan A."/>
            <person name="Chao Q."/>
            <person name="Chen H."/>
            <person name="Cheuk R.F."/>
            <person name="Chin C.W."/>
            <person name="Chung M.K."/>
            <person name="Conn L."/>
            <person name="Conway A.B."/>
            <person name="Conway A.R."/>
            <person name="Creasy T.H."/>
            <person name="Dewar K."/>
            <person name="Dunn P."/>
            <person name="Etgu P."/>
            <person name="Feldblyum T.V."/>
            <person name="Feng J.-D."/>
            <person name="Fong B."/>
            <person name="Fujii C.Y."/>
            <person name="Gill J.E."/>
            <person name="Goldsmith A.D."/>
            <person name="Haas B."/>
            <person name="Hansen N.F."/>
            <person name="Hughes B."/>
            <person name="Huizar L."/>
            <person name="Hunter J.L."/>
            <person name="Jenkins J."/>
            <person name="Johnson-Hopson C."/>
            <person name="Khan S."/>
            <person name="Khaykin E."/>
            <person name="Kim C.J."/>
            <person name="Koo H.L."/>
            <person name="Kremenetskaia I."/>
            <person name="Kurtz D.B."/>
            <person name="Kwan A."/>
            <person name="Lam B."/>
            <person name="Langin-Hooper S."/>
            <person name="Lee A."/>
            <person name="Lee J.M."/>
            <person name="Lenz C.A."/>
            <person name="Li J.H."/>
            <person name="Li Y.-P."/>
            <person name="Lin X."/>
            <person name="Liu S.X."/>
            <person name="Liu Z.A."/>
            <person name="Luros J.S."/>
            <person name="Maiti R."/>
            <person name="Marziali A."/>
            <person name="Militscher J."/>
            <person name="Miranda M."/>
            <person name="Nguyen M."/>
            <person name="Nierman W.C."/>
            <person name="Osborne B.I."/>
            <person name="Pai G."/>
            <person name="Peterson J."/>
            <person name="Pham P.K."/>
            <person name="Rizzo M."/>
            <person name="Rooney T."/>
            <person name="Rowley D."/>
            <person name="Sakano H."/>
            <person name="Salzberg S.L."/>
            <person name="Schwartz J.R."/>
            <person name="Shinn P."/>
            <person name="Southwick A.M."/>
            <person name="Sun H."/>
            <person name="Tallon L.J."/>
            <person name="Tambunga G."/>
            <person name="Toriumi M.J."/>
            <person name="Town C.D."/>
            <person name="Utterback T."/>
            <person name="Van Aken S."/>
            <person name="Vaysberg M."/>
            <person name="Vysotskaia V.S."/>
            <person name="Walker M."/>
            <person name="Wu D."/>
            <person name="Yu G."/>
            <person name="Fraser C.M."/>
            <person name="Venter J.C."/>
            <person name="Davis R.W."/>
        </authorList>
    </citation>
    <scope>NUCLEOTIDE SEQUENCE [LARGE SCALE GENOMIC DNA]</scope>
    <source>
        <strain>cv. Columbia</strain>
    </source>
</reference>
<reference key="2">
    <citation type="journal article" date="2017" name="Plant J.">
        <title>Araport11: a complete reannotation of the Arabidopsis thaliana reference genome.</title>
        <authorList>
            <person name="Cheng C.Y."/>
            <person name="Krishnakumar V."/>
            <person name="Chan A.P."/>
            <person name="Thibaud-Nissen F."/>
            <person name="Schobel S."/>
            <person name="Town C.D."/>
        </authorList>
    </citation>
    <scope>GENOME REANNOTATION</scope>
    <source>
        <strain>cv. Columbia</strain>
    </source>
</reference>
<reference key="3">
    <citation type="journal article" date="2003" name="Science">
        <title>Empirical analysis of transcriptional activity in the Arabidopsis genome.</title>
        <authorList>
            <person name="Yamada K."/>
            <person name="Lim J."/>
            <person name="Dale J.M."/>
            <person name="Chen H."/>
            <person name="Shinn P."/>
            <person name="Palm C.J."/>
            <person name="Southwick A.M."/>
            <person name="Wu H.C."/>
            <person name="Kim C.J."/>
            <person name="Nguyen M."/>
            <person name="Pham P.K."/>
            <person name="Cheuk R.F."/>
            <person name="Karlin-Newmann G."/>
            <person name="Liu S.X."/>
            <person name="Lam B."/>
            <person name="Sakano H."/>
            <person name="Wu T."/>
            <person name="Yu G."/>
            <person name="Miranda M."/>
            <person name="Quach H.L."/>
            <person name="Tripp M."/>
            <person name="Chang C.H."/>
            <person name="Lee J.M."/>
            <person name="Toriumi M.J."/>
            <person name="Chan M.M."/>
            <person name="Tang C.C."/>
            <person name="Onodera C.S."/>
            <person name="Deng J.M."/>
            <person name="Akiyama K."/>
            <person name="Ansari Y."/>
            <person name="Arakawa T."/>
            <person name="Banh J."/>
            <person name="Banno F."/>
            <person name="Bowser L."/>
            <person name="Brooks S.Y."/>
            <person name="Carninci P."/>
            <person name="Chao Q."/>
            <person name="Choy N."/>
            <person name="Enju A."/>
            <person name="Goldsmith A.D."/>
            <person name="Gurjal M."/>
            <person name="Hansen N.F."/>
            <person name="Hayashizaki Y."/>
            <person name="Johnson-Hopson C."/>
            <person name="Hsuan V.W."/>
            <person name="Iida K."/>
            <person name="Karnes M."/>
            <person name="Khan S."/>
            <person name="Koesema E."/>
            <person name="Ishida J."/>
            <person name="Jiang P.X."/>
            <person name="Jones T."/>
            <person name="Kawai J."/>
            <person name="Kamiya A."/>
            <person name="Meyers C."/>
            <person name="Nakajima M."/>
            <person name="Narusaka M."/>
            <person name="Seki M."/>
            <person name="Sakurai T."/>
            <person name="Satou M."/>
            <person name="Tamse R."/>
            <person name="Vaysberg M."/>
            <person name="Wallender E.K."/>
            <person name="Wong C."/>
            <person name="Yamamura Y."/>
            <person name="Yuan S."/>
            <person name="Shinozaki K."/>
            <person name="Davis R.W."/>
            <person name="Theologis A."/>
            <person name="Ecker J.R."/>
        </authorList>
    </citation>
    <scope>NUCLEOTIDE SEQUENCE [LARGE SCALE MRNA]</scope>
    <source>
        <strain>cv. Columbia</strain>
    </source>
</reference>
<reference key="4">
    <citation type="journal article" date="2002" name="Nucleic Acids Res.">
        <title>AtSWI3B, an Arabidopsis homolog of SWI3, a core subunit of yeast Swi/Snf chromatin remodeling complex, interacts with FCA, a regulator of flowering time.</title>
        <authorList>
            <person name="Sarnowski T.J."/>
            <person name="Swiezewski S."/>
            <person name="Pawlikowska K."/>
            <person name="Kaczanowski S."/>
            <person name="Jerzmanowski A."/>
        </authorList>
    </citation>
    <scope>INTERACTION WITH SWI3B</scope>
</reference>
<reference key="5">
    <citation type="journal article" date="2003" name="Plant Mol. Biol.">
        <title>CHB2, a member of the SWI3 gene family, is a global regulator in Arabidopsis.</title>
        <authorList>
            <person name="Zhou C."/>
            <person name="Miki B."/>
            <person name="Wu K."/>
        </authorList>
    </citation>
    <scope>FUNCTION</scope>
    <scope>TISSUE SPECIFICITY</scope>
</reference>
<reference key="6">
    <citation type="journal article" date="2004" name="Development">
        <title>The Arabidopsis thaliana SNF2 homolog AtBRM controls shoot development and flowering.</title>
        <authorList>
            <person name="Farrona S."/>
            <person name="Hurtado L."/>
            <person name="Bowman J.L."/>
            <person name="Reyes J.C."/>
        </authorList>
    </citation>
    <scope>INTERACTION WITH BRM</scope>
</reference>
<reference key="7">
    <citation type="journal article" date="2005" name="Plant Cell">
        <title>SWI3 subunits of putative SWI/SNF chromatin-remodeling complexes play distinct roles during Arabidopsis development.</title>
        <authorList>
            <person name="Sarnowski T.J."/>
            <person name="Rios G."/>
            <person name="Jasik J."/>
            <person name="Swiezewski S."/>
            <person name="Kaczanowski S."/>
            <person name="Li Y."/>
            <person name="Kwiatkowska A."/>
            <person name="Pawlikowska K."/>
            <person name="Kozbial M."/>
            <person name="Kozbial P."/>
            <person name="Koncz C."/>
            <person name="Jerzmanowski A."/>
        </authorList>
    </citation>
    <scope>FUNCTION</scope>
    <scope>DISRUPTION PHENOTYPE</scope>
    <scope>INTERACTION WITH SWI3A AND BSH</scope>
</reference>
<reference key="8">
    <citation type="journal article" date="2016" name="PLoS Genet.">
        <title>Two components of the RNA-Directed DNA methylation pathway associate with MORC6 and silence loci targeted by MORC6 in Arabidopsis.</title>
        <authorList>
            <person name="Liu Z.-W."/>
            <person name="Zhou J.-X."/>
            <person name="Huang H.-W."/>
            <person name="Li Y.-Q."/>
            <person name="Shao C.-R."/>
            <person name="Li L."/>
            <person name="Cai T."/>
            <person name="Chen S."/>
            <person name="He X.-J."/>
        </authorList>
    </citation>
    <scope>INTERACTION WITH MORC6 AND SUVH9</scope>
</reference>
<protein>
    <recommendedName>
        <fullName>SWI/SNF complex subunit SWI3C</fullName>
        <shortName>AtSWI3C</shortName>
    </recommendedName>
    <alternativeName>
        <fullName>Transcription regulatory protein SWI3C</fullName>
    </alternativeName>
</protein>